<gene>
    <name type="primary">PNS1</name>
    <name type="ORF">UMAG_12080</name>
</gene>
<name>PNS1_MYCMD</name>
<dbReference type="EMBL" id="CM003140">
    <property type="protein sequence ID" value="KIS71569.1"/>
    <property type="molecule type" value="Genomic_DNA"/>
</dbReference>
<dbReference type="RefSeq" id="XP_011386824.1">
    <property type="nucleotide sequence ID" value="XM_011388522.1"/>
</dbReference>
<dbReference type="SMR" id="Q4PIP8"/>
<dbReference type="STRING" id="237631.Q4PIP8"/>
<dbReference type="GlyCosmos" id="Q4PIP8">
    <property type="glycosylation" value="3 sites, No reported glycans"/>
</dbReference>
<dbReference type="EnsemblFungi" id="KIS71569">
    <property type="protein sequence ID" value="KIS71569"/>
    <property type="gene ID" value="UMAG_12080"/>
</dbReference>
<dbReference type="GeneID" id="23567847"/>
<dbReference type="KEGG" id="uma:UMAG_12080"/>
<dbReference type="VEuPathDB" id="FungiDB:UMAG_12080"/>
<dbReference type="eggNOG" id="KOG1362">
    <property type="taxonomic scope" value="Eukaryota"/>
</dbReference>
<dbReference type="HOGENOM" id="CLU_026724_0_0_1"/>
<dbReference type="InParanoid" id="Q4PIP8"/>
<dbReference type="OrthoDB" id="44736at2759"/>
<dbReference type="Proteomes" id="UP000000561">
    <property type="component" value="Chromosome 1"/>
</dbReference>
<dbReference type="GO" id="GO:0016020">
    <property type="term" value="C:membrane"/>
    <property type="evidence" value="ECO:0000318"/>
    <property type="project" value="GO_Central"/>
</dbReference>
<dbReference type="GO" id="GO:0005886">
    <property type="term" value="C:plasma membrane"/>
    <property type="evidence" value="ECO:0007669"/>
    <property type="project" value="UniProtKB-SubCell"/>
</dbReference>
<dbReference type="GO" id="GO:0022857">
    <property type="term" value="F:transmembrane transporter activity"/>
    <property type="evidence" value="ECO:0000318"/>
    <property type="project" value="GO_Central"/>
</dbReference>
<dbReference type="GO" id="GO:0055085">
    <property type="term" value="P:transmembrane transport"/>
    <property type="evidence" value="ECO:0000318"/>
    <property type="project" value="GO_Central"/>
</dbReference>
<dbReference type="InterPro" id="IPR007603">
    <property type="entry name" value="Choline_transptr-like"/>
</dbReference>
<dbReference type="PANTHER" id="PTHR12385">
    <property type="entry name" value="CHOLINE TRANSPORTER-LIKE (SLC FAMILY 44)"/>
    <property type="match status" value="1"/>
</dbReference>
<dbReference type="PANTHER" id="PTHR12385:SF4">
    <property type="entry name" value="PROTEIN PNS1"/>
    <property type="match status" value="1"/>
</dbReference>
<dbReference type="Pfam" id="PF04515">
    <property type="entry name" value="Choline_transpo"/>
    <property type="match status" value="1"/>
</dbReference>
<accession>Q4PIP8</accession>
<accession>A0A0D1E6Q3</accession>
<organism>
    <name type="scientific">Mycosarcoma maydis</name>
    <name type="common">Corn smut fungus</name>
    <name type="synonym">Ustilago maydis</name>
    <dbReference type="NCBI Taxonomy" id="5270"/>
    <lineage>
        <taxon>Eukaryota</taxon>
        <taxon>Fungi</taxon>
        <taxon>Dikarya</taxon>
        <taxon>Basidiomycota</taxon>
        <taxon>Ustilaginomycotina</taxon>
        <taxon>Ustilaginomycetes</taxon>
        <taxon>Ustilaginales</taxon>
        <taxon>Ustilaginaceae</taxon>
        <taxon>Mycosarcoma</taxon>
    </lineage>
</organism>
<comment type="function">
    <text evidence="1">Probably involved in transport through the plasma membrane.</text>
</comment>
<comment type="subcellular location">
    <subcellularLocation>
        <location evidence="1">Cell membrane</location>
        <topology evidence="1">Multi-pass membrane protein</topology>
    </subcellularLocation>
</comment>
<comment type="similarity">
    <text evidence="5">Belongs to the CTL (choline transporter-like) family.</text>
</comment>
<feature type="chain" id="PRO_0000191738" description="Protein PNS1">
    <location>
        <begin position="1"/>
        <end position="529"/>
    </location>
</feature>
<feature type="topological domain" description="Cytoplasmic" evidence="5">
    <location>
        <begin position="1"/>
        <end position="84"/>
    </location>
</feature>
<feature type="transmembrane region" description="Helical" evidence="2">
    <location>
        <begin position="85"/>
        <end position="105"/>
    </location>
</feature>
<feature type="topological domain" description="Extracellular" evidence="5">
    <location>
        <begin position="106"/>
        <end position="132"/>
    </location>
</feature>
<feature type="transmembrane region" description="Helical" evidence="2">
    <location>
        <begin position="133"/>
        <end position="153"/>
    </location>
</feature>
<feature type="topological domain" description="Cytoplasmic" evidence="5">
    <location>
        <begin position="154"/>
        <end position="158"/>
    </location>
</feature>
<feature type="transmembrane region" description="Helical" evidence="2">
    <location>
        <begin position="159"/>
        <end position="179"/>
    </location>
</feature>
<feature type="topological domain" description="Extracellular" evidence="5">
    <location>
        <begin position="180"/>
        <end position="184"/>
    </location>
</feature>
<feature type="transmembrane region" description="Helical" evidence="2">
    <location>
        <begin position="185"/>
        <end position="205"/>
    </location>
</feature>
<feature type="topological domain" description="Cytoplasmic" evidence="5">
    <location>
        <begin position="206"/>
        <end position="230"/>
    </location>
</feature>
<feature type="transmembrane region" description="Helical" evidence="2">
    <location>
        <begin position="231"/>
        <end position="251"/>
    </location>
</feature>
<feature type="topological domain" description="Extracellular" evidence="5">
    <location>
        <begin position="252"/>
        <end position="271"/>
    </location>
</feature>
<feature type="transmembrane region" description="Helical" evidence="2">
    <location>
        <begin position="272"/>
        <end position="292"/>
    </location>
</feature>
<feature type="topological domain" description="Cytoplasmic" evidence="5">
    <location>
        <begin position="293"/>
        <end position="294"/>
    </location>
</feature>
<feature type="transmembrane region" description="Helical" evidence="2">
    <location>
        <begin position="295"/>
        <end position="315"/>
    </location>
</feature>
<feature type="topological domain" description="Extracellular" evidence="5">
    <location>
        <begin position="316"/>
        <end position="325"/>
    </location>
</feature>
<feature type="transmembrane region" description="Helical" evidence="2">
    <location>
        <begin position="326"/>
        <end position="346"/>
    </location>
</feature>
<feature type="topological domain" description="Cytoplasmic" evidence="5">
    <location>
        <begin position="347"/>
        <end position="362"/>
    </location>
</feature>
<feature type="transmembrane region" description="Helical" evidence="2">
    <location>
        <begin position="363"/>
        <end position="383"/>
    </location>
</feature>
<feature type="topological domain" description="Extracellular" evidence="5">
    <location>
        <begin position="384"/>
        <end position="427"/>
    </location>
</feature>
<feature type="transmembrane region" description="Helical" evidence="2">
    <location>
        <begin position="428"/>
        <end position="448"/>
    </location>
</feature>
<feature type="topological domain" description="Cytoplasmic" evidence="5">
    <location>
        <begin position="449"/>
        <end position="464"/>
    </location>
</feature>
<feature type="transmembrane region" description="Helical" evidence="2">
    <location>
        <begin position="465"/>
        <end position="485"/>
    </location>
</feature>
<feature type="topological domain" description="Extracellular" evidence="5">
    <location>
        <begin position="486"/>
        <end position="529"/>
    </location>
</feature>
<feature type="region of interest" description="Disordered" evidence="4">
    <location>
        <begin position="1"/>
        <end position="58"/>
    </location>
</feature>
<feature type="compositionally biased region" description="Low complexity" evidence="4">
    <location>
        <begin position="22"/>
        <end position="48"/>
    </location>
</feature>
<feature type="glycosylation site" description="N-linked (GlcNAc...) asparagine" evidence="3">
    <location>
        <position position="114"/>
    </location>
</feature>
<feature type="glycosylation site" description="N-linked (GlcNAc...) asparagine" evidence="3">
    <location>
        <position position="271"/>
    </location>
</feature>
<feature type="glycosylation site" description="N-linked (GlcNAc...) asparagine" evidence="3">
    <location>
        <position position="422"/>
    </location>
</feature>
<keyword id="KW-1003">Cell membrane</keyword>
<keyword id="KW-0325">Glycoprotein</keyword>
<keyword id="KW-0472">Membrane</keyword>
<keyword id="KW-1185">Reference proteome</keyword>
<keyword id="KW-0812">Transmembrane</keyword>
<keyword id="KW-1133">Transmembrane helix</keyword>
<keyword id="KW-0813">Transport</keyword>
<sequence length="529" mass="57785">MSQQYSYGGGGGAGYPPPQMQPPNSYAQANYQGQPQGAQNQYYNGQQPHHNAPQQYYGNDYKQPLKPEGFEGERLQPKPKFRDPIFLVLFLLVFAGFIALSVICLRSYSNADVNVSIGRANVAGSTLNGHTAIMFMICCAVALVLSFVYILLVRTFPKIILEATLLLTTLSNVAFCVYLWVRGNTAAAIIFTIFAVLSVIAYFFMRKRIPLAKLILVTVIRTAEQYKSVYVVALGGLIVETAFSAWTSWVVVAAYQRFEPSGQAAGSSSSNASIIGIMVFIVFAYYWISEVIKNIAFTTVAGIFGVAYYNANKVANAAWGAFRRSMTYSLGSICFGSLIVAILDLLRALFNILQSQAASDGDMTGQILACVAGCCVSCIQGLVDYFNRYAYINIALYGNGYITAAKETWALLKDRGIDAIINDSLVNIVFNCGAFIIGLLTALFAFIYEQLTNPRYLQNDAGYYSIVLLVAFGLGFNIALSVGAGSIASGVSTYFVALAEDPYILQGKNPELFEMIRQQYPQVVQGVNH</sequence>
<protein>
    <recommendedName>
        <fullName>Protein PNS1</fullName>
    </recommendedName>
</protein>
<evidence type="ECO:0000250" key="1"/>
<evidence type="ECO:0000255" key="2"/>
<evidence type="ECO:0000255" key="3">
    <source>
        <dbReference type="PROSITE-ProRule" id="PRU00498"/>
    </source>
</evidence>
<evidence type="ECO:0000256" key="4">
    <source>
        <dbReference type="SAM" id="MobiDB-lite"/>
    </source>
</evidence>
<evidence type="ECO:0000305" key="5"/>
<reference key="1">
    <citation type="journal article" date="2006" name="Nature">
        <title>Insights from the genome of the biotrophic fungal plant pathogen Ustilago maydis.</title>
        <authorList>
            <person name="Kaemper J."/>
            <person name="Kahmann R."/>
            <person name="Boelker M."/>
            <person name="Ma L.-J."/>
            <person name="Brefort T."/>
            <person name="Saville B.J."/>
            <person name="Banuett F."/>
            <person name="Kronstad J.W."/>
            <person name="Gold S.E."/>
            <person name="Mueller O."/>
            <person name="Perlin M.H."/>
            <person name="Woesten H.A.B."/>
            <person name="de Vries R."/>
            <person name="Ruiz-Herrera J."/>
            <person name="Reynaga-Pena C.G."/>
            <person name="Snetselaar K."/>
            <person name="McCann M."/>
            <person name="Perez-Martin J."/>
            <person name="Feldbruegge M."/>
            <person name="Basse C.W."/>
            <person name="Steinberg G."/>
            <person name="Ibeas J.I."/>
            <person name="Holloman W."/>
            <person name="Guzman P."/>
            <person name="Farman M.L."/>
            <person name="Stajich J.E."/>
            <person name="Sentandreu R."/>
            <person name="Gonzalez-Prieto J.M."/>
            <person name="Kennell J.C."/>
            <person name="Molina L."/>
            <person name="Schirawski J."/>
            <person name="Mendoza-Mendoza A."/>
            <person name="Greilinger D."/>
            <person name="Muench K."/>
            <person name="Roessel N."/>
            <person name="Scherer M."/>
            <person name="Vranes M."/>
            <person name="Ladendorf O."/>
            <person name="Vincon V."/>
            <person name="Fuchs U."/>
            <person name="Sandrock B."/>
            <person name="Meng S."/>
            <person name="Ho E.C.H."/>
            <person name="Cahill M.J."/>
            <person name="Boyce K.J."/>
            <person name="Klose J."/>
            <person name="Klosterman S.J."/>
            <person name="Deelstra H.J."/>
            <person name="Ortiz-Castellanos L."/>
            <person name="Li W."/>
            <person name="Sanchez-Alonso P."/>
            <person name="Schreier P.H."/>
            <person name="Haeuser-Hahn I."/>
            <person name="Vaupel M."/>
            <person name="Koopmann E."/>
            <person name="Friedrich G."/>
            <person name="Voss H."/>
            <person name="Schlueter T."/>
            <person name="Margolis J."/>
            <person name="Platt D."/>
            <person name="Swimmer C."/>
            <person name="Gnirke A."/>
            <person name="Chen F."/>
            <person name="Vysotskaia V."/>
            <person name="Mannhaupt G."/>
            <person name="Gueldener U."/>
            <person name="Muensterkoetter M."/>
            <person name="Haase D."/>
            <person name="Oesterheld M."/>
            <person name="Mewes H.-W."/>
            <person name="Mauceli E.W."/>
            <person name="DeCaprio D."/>
            <person name="Wade C.M."/>
            <person name="Butler J."/>
            <person name="Young S.K."/>
            <person name="Jaffe D.B."/>
            <person name="Calvo S.E."/>
            <person name="Nusbaum C."/>
            <person name="Galagan J.E."/>
            <person name="Birren B.W."/>
        </authorList>
    </citation>
    <scope>NUCLEOTIDE SEQUENCE [LARGE SCALE GENOMIC DNA]</scope>
    <source>
        <strain>DSM 14603 / FGSC 9021 / UM521</strain>
    </source>
</reference>
<reference key="2">
    <citation type="submission" date="2014-09" db="EMBL/GenBank/DDBJ databases">
        <authorList>
            <person name="Gueldener U."/>
            <person name="Muensterkoetter M."/>
            <person name="Walter M.C."/>
            <person name="Mannhaupt G."/>
            <person name="Kahmann R."/>
        </authorList>
    </citation>
    <scope>GENOME REANNOTATION</scope>
    <source>
        <strain>DSM 14603 / FGSC 9021 / UM521</strain>
    </source>
</reference>
<proteinExistence type="inferred from homology"/>